<name>NHAA1_MAGMM</name>
<accession>A0L5H1</accession>
<evidence type="ECO:0000255" key="1">
    <source>
        <dbReference type="HAMAP-Rule" id="MF_01844"/>
    </source>
</evidence>
<sequence>MNRWLKNMLHNEAASGVLIFLAAVAAMLIENSSLEPYYNSFLNIPVAVQFSELKIAKPLLLWINDGLMAVFFLLVGLELKREFLEGQLAQPANVVLPVVGAVGGIVGPALIYVMFNYTNPVALQGWAVPTATDIAFAMGVLALLGKRVPAAIKLFLLTLAIIDDLVAIVIIAIFYTSDLSVGSLTVAGGAIALLFLLNRIGVKGIAPYVLVGMVLWVAVLKSGVHATLAGVVLAMAIPIKGETPEHGSPLHALEHDLHHVVGLVILPLFAFANAGVSLAGLGLNVLLEPVAMGIGLGLLLGKQIGVMGAVWLANLLGVAKKPESLSWTQLYGVALLCGIGFTMSLFISSLAFEHSGAQVVAGAADAGHARLGILSGSLVSGVLGYLVLRFSLARKG</sequence>
<gene>
    <name evidence="1" type="primary">nhaA1</name>
    <name type="ordered locus">Mmc1_0693</name>
</gene>
<comment type="function">
    <text evidence="1">Na(+)/H(+) antiporter that extrudes sodium in exchange for external protons.</text>
</comment>
<comment type="catalytic activity">
    <reaction evidence="1">
        <text>Na(+)(in) + 2 H(+)(out) = Na(+)(out) + 2 H(+)(in)</text>
        <dbReference type="Rhea" id="RHEA:29251"/>
        <dbReference type="ChEBI" id="CHEBI:15378"/>
        <dbReference type="ChEBI" id="CHEBI:29101"/>
    </reaction>
    <physiologicalReaction direction="left-to-right" evidence="1">
        <dbReference type="Rhea" id="RHEA:29252"/>
    </physiologicalReaction>
</comment>
<comment type="subcellular location">
    <subcellularLocation>
        <location evidence="1">Cell inner membrane</location>
        <topology evidence="1">Multi-pass membrane protein</topology>
    </subcellularLocation>
</comment>
<comment type="similarity">
    <text evidence="1">Belongs to the NhaA Na(+)/H(+) (TC 2.A.33) antiporter family.</text>
</comment>
<feature type="chain" id="PRO_0000334332" description="Na(+)/H(+) antiporter NhaA 1">
    <location>
        <begin position="1"/>
        <end position="396"/>
    </location>
</feature>
<feature type="transmembrane region" description="Helical" evidence="1">
    <location>
        <begin position="9"/>
        <end position="29"/>
    </location>
</feature>
<feature type="transmembrane region" description="Helical" evidence="1">
    <location>
        <begin position="59"/>
        <end position="79"/>
    </location>
</feature>
<feature type="transmembrane region" description="Helical" evidence="1">
    <location>
        <begin position="95"/>
        <end position="115"/>
    </location>
</feature>
<feature type="transmembrane region" description="Helical" evidence="1">
    <location>
        <begin position="125"/>
        <end position="145"/>
    </location>
</feature>
<feature type="transmembrane region" description="Helical" evidence="1">
    <location>
        <begin position="154"/>
        <end position="174"/>
    </location>
</feature>
<feature type="transmembrane region" description="Helical" evidence="1">
    <location>
        <begin position="177"/>
        <end position="197"/>
    </location>
</feature>
<feature type="transmembrane region" description="Helical" evidence="1">
    <location>
        <begin position="200"/>
        <end position="220"/>
    </location>
</feature>
<feature type="transmembrane region" description="Helical" evidence="1">
    <location>
        <begin position="223"/>
        <end position="243"/>
    </location>
</feature>
<feature type="transmembrane region" description="Helical" evidence="1">
    <location>
        <begin position="260"/>
        <end position="280"/>
    </location>
</feature>
<feature type="transmembrane region" description="Helical" evidence="1">
    <location>
        <begin position="281"/>
        <end position="301"/>
    </location>
</feature>
<feature type="transmembrane region" description="Helical" evidence="1">
    <location>
        <begin position="332"/>
        <end position="352"/>
    </location>
</feature>
<feature type="transmembrane region" description="Helical" evidence="1">
    <location>
        <begin position="373"/>
        <end position="393"/>
    </location>
</feature>
<dbReference type="EMBL" id="CP000471">
    <property type="protein sequence ID" value="ABK43214.1"/>
    <property type="molecule type" value="Genomic_DNA"/>
</dbReference>
<dbReference type="RefSeq" id="WP_011712374.1">
    <property type="nucleotide sequence ID" value="NC_008576.1"/>
</dbReference>
<dbReference type="SMR" id="A0L5H1"/>
<dbReference type="STRING" id="156889.Mmc1_0693"/>
<dbReference type="KEGG" id="mgm:Mmc1_0693"/>
<dbReference type="eggNOG" id="COG3004">
    <property type="taxonomic scope" value="Bacteria"/>
</dbReference>
<dbReference type="HOGENOM" id="CLU_015803_1_0_5"/>
<dbReference type="OrthoDB" id="9808135at2"/>
<dbReference type="Proteomes" id="UP000002586">
    <property type="component" value="Chromosome"/>
</dbReference>
<dbReference type="GO" id="GO:0005886">
    <property type="term" value="C:plasma membrane"/>
    <property type="evidence" value="ECO:0007669"/>
    <property type="project" value="UniProtKB-SubCell"/>
</dbReference>
<dbReference type="GO" id="GO:0015385">
    <property type="term" value="F:sodium:proton antiporter activity"/>
    <property type="evidence" value="ECO:0007669"/>
    <property type="project" value="TreeGrafter"/>
</dbReference>
<dbReference type="GO" id="GO:0006885">
    <property type="term" value="P:regulation of pH"/>
    <property type="evidence" value="ECO:0007669"/>
    <property type="project" value="InterPro"/>
</dbReference>
<dbReference type="Gene3D" id="1.20.1530.10">
    <property type="entry name" value="Na+/H+ antiporter like domain"/>
    <property type="match status" value="1"/>
</dbReference>
<dbReference type="HAMAP" id="MF_01844">
    <property type="entry name" value="NhaA"/>
    <property type="match status" value="1"/>
</dbReference>
<dbReference type="InterPro" id="IPR023171">
    <property type="entry name" value="Na/H_antiporter_dom_sf"/>
</dbReference>
<dbReference type="InterPro" id="IPR004670">
    <property type="entry name" value="NhaA"/>
</dbReference>
<dbReference type="NCBIfam" id="TIGR00773">
    <property type="entry name" value="NhaA"/>
    <property type="match status" value="1"/>
</dbReference>
<dbReference type="NCBIfam" id="NF007111">
    <property type="entry name" value="PRK09560.1"/>
    <property type="match status" value="1"/>
</dbReference>
<dbReference type="NCBIfam" id="NF007112">
    <property type="entry name" value="PRK09561.1"/>
    <property type="match status" value="1"/>
</dbReference>
<dbReference type="PANTHER" id="PTHR30341:SF0">
    <property type="entry name" value="NA(+)_H(+) ANTIPORTER NHAA"/>
    <property type="match status" value="1"/>
</dbReference>
<dbReference type="PANTHER" id="PTHR30341">
    <property type="entry name" value="SODIUM ION/PROTON ANTIPORTER NHAA-RELATED"/>
    <property type="match status" value="1"/>
</dbReference>
<dbReference type="Pfam" id="PF06965">
    <property type="entry name" value="Na_H_antiport_1"/>
    <property type="match status" value="1"/>
</dbReference>
<organism>
    <name type="scientific">Magnetococcus marinus (strain ATCC BAA-1437 / JCM 17883 / MC-1)</name>
    <dbReference type="NCBI Taxonomy" id="156889"/>
    <lineage>
        <taxon>Bacteria</taxon>
        <taxon>Pseudomonadati</taxon>
        <taxon>Pseudomonadota</taxon>
        <taxon>Alphaproteobacteria</taxon>
        <taxon>Magnetococcales</taxon>
        <taxon>Magnetococcaceae</taxon>
        <taxon>Magnetococcus</taxon>
    </lineage>
</organism>
<reference key="1">
    <citation type="journal article" date="2009" name="Appl. Environ. Microbiol.">
        <title>Complete genome sequence of the chemolithoautotrophic marine magnetotactic coccus strain MC-1.</title>
        <authorList>
            <person name="Schubbe S."/>
            <person name="Williams T.J."/>
            <person name="Xie G."/>
            <person name="Kiss H.E."/>
            <person name="Brettin T.S."/>
            <person name="Martinez D."/>
            <person name="Ross C.A."/>
            <person name="Schuler D."/>
            <person name="Cox B.L."/>
            <person name="Nealson K.H."/>
            <person name="Bazylinski D.A."/>
        </authorList>
    </citation>
    <scope>NUCLEOTIDE SEQUENCE [LARGE SCALE GENOMIC DNA]</scope>
    <source>
        <strain>ATCC BAA-1437 / JCM 17883 / MC-1</strain>
    </source>
</reference>
<proteinExistence type="inferred from homology"/>
<keyword id="KW-0050">Antiport</keyword>
<keyword id="KW-0997">Cell inner membrane</keyword>
<keyword id="KW-1003">Cell membrane</keyword>
<keyword id="KW-0406">Ion transport</keyword>
<keyword id="KW-0472">Membrane</keyword>
<keyword id="KW-1185">Reference proteome</keyword>
<keyword id="KW-0915">Sodium</keyword>
<keyword id="KW-0739">Sodium transport</keyword>
<keyword id="KW-0812">Transmembrane</keyword>
<keyword id="KW-1133">Transmembrane helix</keyword>
<keyword id="KW-0813">Transport</keyword>
<protein>
    <recommendedName>
        <fullName evidence="1">Na(+)/H(+) antiporter NhaA 1</fullName>
    </recommendedName>
    <alternativeName>
        <fullName evidence="1">Sodium/proton antiporter NhaA 1</fullName>
    </alternativeName>
</protein>